<organism>
    <name type="scientific">Lachnoclostridium phytofermentans (strain ATCC 700394 / DSM 18823 / ISDg)</name>
    <name type="common">Clostridium phytofermentans</name>
    <dbReference type="NCBI Taxonomy" id="357809"/>
    <lineage>
        <taxon>Bacteria</taxon>
        <taxon>Bacillati</taxon>
        <taxon>Bacillota</taxon>
        <taxon>Clostridia</taxon>
        <taxon>Lachnospirales</taxon>
        <taxon>Lachnospiraceae</taxon>
    </lineage>
</organism>
<feature type="chain" id="PRO_1000085968" description="Small ribosomal subunit protein uS4">
    <location>
        <begin position="1"/>
        <end position="198"/>
    </location>
</feature>
<feature type="domain" description="S4 RNA-binding" evidence="1">
    <location>
        <begin position="88"/>
        <end position="153"/>
    </location>
</feature>
<gene>
    <name evidence="1" type="primary">rpsD</name>
    <name type="ordered locus">Cphy_3640</name>
</gene>
<protein>
    <recommendedName>
        <fullName evidence="1">Small ribosomal subunit protein uS4</fullName>
    </recommendedName>
    <alternativeName>
        <fullName evidence="2">30S ribosomal protein S4</fullName>
    </alternativeName>
</protein>
<reference key="1">
    <citation type="submission" date="2007-11" db="EMBL/GenBank/DDBJ databases">
        <title>Complete genome sequence of Clostridium phytofermentans ISDg.</title>
        <authorList>
            <person name="Leschine S.B."/>
            <person name="Warnick T.A."/>
            <person name="Blanchard J.L."/>
            <person name="Schnell D.J."/>
            <person name="Petit E.L."/>
            <person name="LaTouf W.G."/>
            <person name="Copeland A."/>
            <person name="Lucas S."/>
            <person name="Lapidus A."/>
            <person name="Barry K."/>
            <person name="Glavina del Rio T."/>
            <person name="Dalin E."/>
            <person name="Tice H."/>
            <person name="Pitluck S."/>
            <person name="Kiss H."/>
            <person name="Brettin T."/>
            <person name="Bruce D."/>
            <person name="Detter J.C."/>
            <person name="Han C."/>
            <person name="Kuske C."/>
            <person name="Schmutz J."/>
            <person name="Larimer F."/>
            <person name="Land M."/>
            <person name="Hauser L."/>
            <person name="Kyrpides N."/>
            <person name="Kim E.A."/>
            <person name="Richardson P."/>
        </authorList>
    </citation>
    <scope>NUCLEOTIDE SEQUENCE [LARGE SCALE GENOMIC DNA]</scope>
    <source>
        <strain>ATCC 700394 / DSM 18823 / ISDg</strain>
    </source>
</reference>
<evidence type="ECO:0000255" key="1">
    <source>
        <dbReference type="HAMAP-Rule" id="MF_01306"/>
    </source>
</evidence>
<evidence type="ECO:0000305" key="2"/>
<comment type="function">
    <text evidence="1">One of the primary rRNA binding proteins, it binds directly to 16S rRNA where it nucleates assembly of the body of the 30S subunit.</text>
</comment>
<comment type="function">
    <text evidence="1">With S5 and S12 plays an important role in translational accuracy.</text>
</comment>
<comment type="subunit">
    <text evidence="1">Part of the 30S ribosomal subunit. Contacts protein S5. The interaction surface between S4 and S5 is involved in control of translational fidelity.</text>
</comment>
<comment type="similarity">
    <text evidence="1">Belongs to the universal ribosomal protein uS4 family.</text>
</comment>
<name>RS4_LACP7</name>
<dbReference type="EMBL" id="CP000885">
    <property type="protein sequence ID" value="ABX43987.1"/>
    <property type="molecule type" value="Genomic_DNA"/>
</dbReference>
<dbReference type="RefSeq" id="WP_012201635.1">
    <property type="nucleotide sequence ID" value="NC_010001.1"/>
</dbReference>
<dbReference type="SMR" id="A9KJG7"/>
<dbReference type="STRING" id="357809.Cphy_3640"/>
<dbReference type="KEGG" id="cpy:Cphy_3640"/>
<dbReference type="eggNOG" id="COG0522">
    <property type="taxonomic scope" value="Bacteria"/>
</dbReference>
<dbReference type="HOGENOM" id="CLU_092403_0_2_9"/>
<dbReference type="OrthoDB" id="9803672at2"/>
<dbReference type="Proteomes" id="UP000000370">
    <property type="component" value="Chromosome"/>
</dbReference>
<dbReference type="GO" id="GO:0015935">
    <property type="term" value="C:small ribosomal subunit"/>
    <property type="evidence" value="ECO:0007669"/>
    <property type="project" value="InterPro"/>
</dbReference>
<dbReference type="GO" id="GO:0019843">
    <property type="term" value="F:rRNA binding"/>
    <property type="evidence" value="ECO:0007669"/>
    <property type="project" value="UniProtKB-UniRule"/>
</dbReference>
<dbReference type="GO" id="GO:0003735">
    <property type="term" value="F:structural constituent of ribosome"/>
    <property type="evidence" value="ECO:0007669"/>
    <property type="project" value="InterPro"/>
</dbReference>
<dbReference type="GO" id="GO:0042274">
    <property type="term" value="P:ribosomal small subunit biogenesis"/>
    <property type="evidence" value="ECO:0007669"/>
    <property type="project" value="TreeGrafter"/>
</dbReference>
<dbReference type="GO" id="GO:0006412">
    <property type="term" value="P:translation"/>
    <property type="evidence" value="ECO:0007669"/>
    <property type="project" value="UniProtKB-UniRule"/>
</dbReference>
<dbReference type="CDD" id="cd00165">
    <property type="entry name" value="S4"/>
    <property type="match status" value="1"/>
</dbReference>
<dbReference type="FunFam" id="3.10.290.10:FF:000001">
    <property type="entry name" value="30S ribosomal protein S4"/>
    <property type="match status" value="1"/>
</dbReference>
<dbReference type="Gene3D" id="1.10.1050.10">
    <property type="entry name" value="Ribosomal Protein S4 Delta 41, Chain A, domain 1"/>
    <property type="match status" value="1"/>
</dbReference>
<dbReference type="Gene3D" id="3.10.290.10">
    <property type="entry name" value="RNA-binding S4 domain"/>
    <property type="match status" value="1"/>
</dbReference>
<dbReference type="HAMAP" id="MF_01306_B">
    <property type="entry name" value="Ribosomal_uS4_B"/>
    <property type="match status" value="1"/>
</dbReference>
<dbReference type="InterPro" id="IPR022801">
    <property type="entry name" value="Ribosomal_uS4"/>
</dbReference>
<dbReference type="InterPro" id="IPR005709">
    <property type="entry name" value="Ribosomal_uS4_bac-type"/>
</dbReference>
<dbReference type="InterPro" id="IPR018079">
    <property type="entry name" value="Ribosomal_uS4_CS"/>
</dbReference>
<dbReference type="InterPro" id="IPR001912">
    <property type="entry name" value="Ribosomal_uS4_N"/>
</dbReference>
<dbReference type="InterPro" id="IPR002942">
    <property type="entry name" value="S4_RNA-bd"/>
</dbReference>
<dbReference type="InterPro" id="IPR036986">
    <property type="entry name" value="S4_RNA-bd_sf"/>
</dbReference>
<dbReference type="NCBIfam" id="NF003717">
    <property type="entry name" value="PRK05327.1"/>
    <property type="match status" value="1"/>
</dbReference>
<dbReference type="NCBIfam" id="TIGR01017">
    <property type="entry name" value="rpsD_bact"/>
    <property type="match status" value="1"/>
</dbReference>
<dbReference type="PANTHER" id="PTHR11831">
    <property type="entry name" value="30S 40S RIBOSOMAL PROTEIN"/>
    <property type="match status" value="1"/>
</dbReference>
<dbReference type="PANTHER" id="PTHR11831:SF4">
    <property type="entry name" value="SMALL RIBOSOMAL SUBUNIT PROTEIN US4M"/>
    <property type="match status" value="1"/>
</dbReference>
<dbReference type="Pfam" id="PF00163">
    <property type="entry name" value="Ribosomal_S4"/>
    <property type="match status" value="1"/>
</dbReference>
<dbReference type="Pfam" id="PF01479">
    <property type="entry name" value="S4"/>
    <property type="match status" value="1"/>
</dbReference>
<dbReference type="SMART" id="SM01390">
    <property type="entry name" value="Ribosomal_S4"/>
    <property type="match status" value="1"/>
</dbReference>
<dbReference type="SMART" id="SM00363">
    <property type="entry name" value="S4"/>
    <property type="match status" value="1"/>
</dbReference>
<dbReference type="SUPFAM" id="SSF55174">
    <property type="entry name" value="Alpha-L RNA-binding motif"/>
    <property type="match status" value="1"/>
</dbReference>
<dbReference type="PROSITE" id="PS00632">
    <property type="entry name" value="RIBOSOMAL_S4"/>
    <property type="match status" value="1"/>
</dbReference>
<dbReference type="PROSITE" id="PS50889">
    <property type="entry name" value="S4"/>
    <property type="match status" value="1"/>
</dbReference>
<accession>A9KJG7</accession>
<proteinExistence type="inferred from homology"/>
<sequence length="198" mass="22640">MARDMSPVLKRCRALGLEPTFLGIDKKSNRNFARAGKKISEYGTQLREKQKAKFIYGVLEKPFRNNFDKAKKLKYGTTGENLLILLELRLDNVMFRMGYGRTRTEARQIVDHKHVLVNGKCVNIPSYQVKAGDVISIKEKCKSAQRYKDILEVTDGRTVPAWLEADHENLTGTVKEIPTRDQIDVPVNEVLIVELYSK</sequence>
<keyword id="KW-1185">Reference proteome</keyword>
<keyword id="KW-0687">Ribonucleoprotein</keyword>
<keyword id="KW-0689">Ribosomal protein</keyword>
<keyword id="KW-0694">RNA-binding</keyword>
<keyword id="KW-0699">rRNA-binding</keyword>